<organism>
    <name type="scientific">Azotobacter vinelandii</name>
    <dbReference type="NCBI Taxonomy" id="354"/>
    <lineage>
        <taxon>Bacteria</taxon>
        <taxon>Pseudomonadati</taxon>
        <taxon>Pseudomonadota</taxon>
        <taxon>Gammaproteobacteria</taxon>
        <taxon>Pseudomonadales</taxon>
        <taxon>Pseudomonadaceae</taxon>
        <taxon>Azotobacter</taxon>
    </lineage>
</organism>
<accession>P37731</accession>
<dbReference type="EMBL" id="X69077">
    <property type="status" value="NOT_ANNOTATED_CDS"/>
    <property type="molecule type" value="Genomic_DNA"/>
</dbReference>
<dbReference type="PIR" id="S31046">
    <property type="entry name" value="S31046"/>
</dbReference>
<dbReference type="RefSeq" id="WP_012703507.1">
    <property type="nucleotide sequence ID" value="NZ_FPKM01000015.1"/>
</dbReference>
<dbReference type="SMR" id="P37731"/>
<dbReference type="GeneID" id="88187901"/>
<dbReference type="OMA" id="GPWDTFF"/>
<dbReference type="GO" id="GO:0005886">
    <property type="term" value="C:plasma membrane"/>
    <property type="evidence" value="ECO:0007669"/>
    <property type="project" value="UniProtKB-SubCell"/>
</dbReference>
<dbReference type="GO" id="GO:0015098">
    <property type="term" value="F:molybdate ion transmembrane transporter activity"/>
    <property type="evidence" value="ECO:0007669"/>
    <property type="project" value="InterPro"/>
</dbReference>
<dbReference type="CDD" id="cd06261">
    <property type="entry name" value="TM_PBP2"/>
    <property type="match status" value="1"/>
</dbReference>
<dbReference type="FunFam" id="1.10.3720.10:FF:000054">
    <property type="entry name" value="Molybdenum transport system permease"/>
    <property type="match status" value="1"/>
</dbReference>
<dbReference type="Gene3D" id="1.10.3720.10">
    <property type="entry name" value="MetI-like"/>
    <property type="match status" value="1"/>
</dbReference>
<dbReference type="InterPro" id="IPR000515">
    <property type="entry name" value="MetI-like"/>
</dbReference>
<dbReference type="InterPro" id="IPR035906">
    <property type="entry name" value="MetI-like_sf"/>
</dbReference>
<dbReference type="InterPro" id="IPR011867">
    <property type="entry name" value="ModB_ABC"/>
</dbReference>
<dbReference type="NCBIfam" id="TIGR02141">
    <property type="entry name" value="modB_ABC"/>
    <property type="match status" value="1"/>
</dbReference>
<dbReference type="PANTHER" id="PTHR30183:SF8">
    <property type="entry name" value="MOLYBDENUM TRANSPORT SYSTEM PERMEASE"/>
    <property type="match status" value="1"/>
</dbReference>
<dbReference type="PANTHER" id="PTHR30183">
    <property type="entry name" value="MOLYBDENUM TRANSPORT SYSTEM PERMEASE PROTEIN MODB"/>
    <property type="match status" value="1"/>
</dbReference>
<dbReference type="Pfam" id="PF00528">
    <property type="entry name" value="BPD_transp_1"/>
    <property type="match status" value="1"/>
</dbReference>
<dbReference type="SUPFAM" id="SSF161098">
    <property type="entry name" value="MetI-like"/>
    <property type="match status" value="1"/>
</dbReference>
<dbReference type="PROSITE" id="PS50928">
    <property type="entry name" value="ABC_TM1"/>
    <property type="match status" value="1"/>
</dbReference>
<proteinExistence type="inferred from homology"/>
<feature type="chain" id="PRO_0000060110" description="Molybdenum transport system permease protein ModB">
    <location>
        <begin position="1"/>
        <end position="226"/>
    </location>
</feature>
<feature type="transmembrane region" description="Helical" evidence="2">
    <location>
        <begin position="17"/>
        <end position="37"/>
    </location>
</feature>
<feature type="transmembrane region" description="Helical" evidence="2">
    <location>
        <begin position="47"/>
        <end position="67"/>
    </location>
</feature>
<feature type="transmembrane region" description="Helical" evidence="2">
    <location>
        <begin position="88"/>
        <end position="108"/>
    </location>
</feature>
<feature type="transmembrane region" description="Helical" evidence="2">
    <location>
        <begin position="150"/>
        <end position="170"/>
    </location>
</feature>
<feature type="transmembrane region" description="Helical" evidence="2">
    <location>
        <begin position="197"/>
        <end position="217"/>
    </location>
</feature>
<feature type="domain" description="ABC transmembrane type-1" evidence="2">
    <location>
        <begin position="11"/>
        <end position="217"/>
    </location>
</feature>
<reference key="1">
    <citation type="journal article" date="1993" name="Mol. Microbiol.">
        <title>Characterization of genes involved in molybdenum transport in Azotobacter vinelandii.</title>
        <authorList>
            <person name="Luque F."/>
            <person name="Mitchenall L.A."/>
            <person name="Chapman M."/>
            <person name="Christine R."/>
            <person name="Pau R.N."/>
        </authorList>
    </citation>
    <scope>NUCLEOTIDE SEQUENCE [GENOMIC DNA]</scope>
    <source>
        <strain>DJ35</strain>
    </source>
</reference>
<reference key="2">
    <citation type="journal article" date="1995" name="J. Bacteriol.">
        <title>Mutational analysis of genes of the mod locus involved in molybdenum transport, homeostasis, and processing in Azotobacter vinelandii.</title>
        <authorList>
            <person name="Mouncey N.J."/>
            <person name="Mitchenall L.A."/>
            <person name="Pau R.N."/>
        </authorList>
    </citation>
    <scope>GENE NAME</scope>
</reference>
<keyword id="KW-0997">Cell inner membrane</keyword>
<keyword id="KW-1003">Cell membrane</keyword>
<keyword id="KW-0472">Membrane</keyword>
<keyword id="KW-0500">Molybdenum</keyword>
<keyword id="KW-0812">Transmembrane</keyword>
<keyword id="KW-1133">Transmembrane helix</keyword>
<keyword id="KW-0813">Transport</keyword>
<comment type="function">
    <text>Part of the binding-protein-dependent transport system for molybdenum; probably responsible for the translocation of the substrate across the membrane.</text>
</comment>
<comment type="subcellular location">
    <subcellularLocation>
        <location evidence="1">Cell inner membrane</location>
        <topology evidence="2">Multi-pass membrane protein</topology>
    </subcellularLocation>
</comment>
<comment type="similarity">
    <text evidence="3">Belongs to the binding-protein-dependent transport system permease family. CysTW subfamily.</text>
</comment>
<gene>
    <name type="primary">modB</name>
    <name type="synonym">modC</name>
</gene>
<name>MODB_AZOVI</name>
<protein>
    <recommendedName>
        <fullName>Molybdenum transport system permease protein ModB</fullName>
    </recommendedName>
</protein>
<evidence type="ECO:0000250" key="1"/>
<evidence type="ECO:0000255" key="2">
    <source>
        <dbReference type="PROSITE-ProRule" id="PRU00441"/>
    </source>
</evidence>
<evidence type="ECO:0000305" key="3"/>
<sequence length="226" mass="24302">MPLSEHDLAAIRLTLELASLTTVLLLVVGTPIAWWLARTRSRLKGAIGAVVALPLVLPPTVLGFYLLVTMGPHGPIGQLTQFLGLGTLPFTFAGLVVASVFYSLPFVVQPLQNAFEAIGERPLEVASTLRAGPWDTFFTVVVPLARPGFITAAILGFAHTVGEFGVVLMIGGNIPEKTRTVAVQIFDHVEAMEYAQAHWLAGGMVLFSFLVLFALYSSRRFKAGLS</sequence>